<dbReference type="EC" id="1.1.1.244" evidence="1 2 5 6"/>
<dbReference type="EMBL" id="M65004">
    <property type="protein sequence ID" value="AAA22593.1"/>
    <property type="molecule type" value="Genomic_DNA"/>
</dbReference>
<dbReference type="RefSeq" id="WP_274857131.1">
    <property type="nucleotide sequence ID" value="NZ_PNFF01000007.1"/>
</dbReference>
<dbReference type="SMR" id="P31005"/>
<dbReference type="KEGG" id="ag:AAA22593"/>
<dbReference type="BioCyc" id="MetaCyc:MONOMER-15636"/>
<dbReference type="SABIO-RK" id="P31005"/>
<dbReference type="UniPathway" id="UPA00928">
    <property type="reaction ID" value="UER00893"/>
</dbReference>
<dbReference type="GO" id="GO:0005737">
    <property type="term" value="C:cytoplasm"/>
    <property type="evidence" value="ECO:0000314"/>
    <property type="project" value="UniProtKB"/>
</dbReference>
<dbReference type="GO" id="GO:0000287">
    <property type="term" value="F:magnesium ion binding"/>
    <property type="evidence" value="ECO:0000314"/>
    <property type="project" value="UniProtKB"/>
</dbReference>
<dbReference type="GO" id="GO:0050093">
    <property type="term" value="F:methanol dehydrogenase (NAD+) activity"/>
    <property type="evidence" value="ECO:0000314"/>
    <property type="project" value="UniProtKB"/>
</dbReference>
<dbReference type="GO" id="GO:0008270">
    <property type="term" value="F:zinc ion binding"/>
    <property type="evidence" value="ECO:0000314"/>
    <property type="project" value="UniProtKB"/>
</dbReference>
<dbReference type="GO" id="GO:0046170">
    <property type="term" value="P:methanol catabolic process"/>
    <property type="evidence" value="ECO:0007669"/>
    <property type="project" value="UniProtKB-UniPathway"/>
</dbReference>
<dbReference type="CDD" id="cd08188">
    <property type="entry name" value="PDDH"/>
    <property type="match status" value="1"/>
</dbReference>
<dbReference type="FunFam" id="3.40.50.1970:FF:000003">
    <property type="entry name" value="Alcohol dehydrogenase, iron-containing"/>
    <property type="match status" value="1"/>
</dbReference>
<dbReference type="FunFam" id="1.20.1090.10:FF:000001">
    <property type="entry name" value="Aldehyde-alcohol dehydrogenase"/>
    <property type="match status" value="1"/>
</dbReference>
<dbReference type="Gene3D" id="3.40.50.1970">
    <property type="match status" value="1"/>
</dbReference>
<dbReference type="Gene3D" id="1.20.1090.10">
    <property type="entry name" value="Dehydroquinate synthase-like - alpha domain"/>
    <property type="match status" value="1"/>
</dbReference>
<dbReference type="InterPro" id="IPR001670">
    <property type="entry name" value="ADH_Fe/GldA"/>
</dbReference>
<dbReference type="InterPro" id="IPR056798">
    <property type="entry name" value="ADH_Fe_C"/>
</dbReference>
<dbReference type="InterPro" id="IPR018211">
    <property type="entry name" value="ADH_Fe_CS"/>
</dbReference>
<dbReference type="InterPro" id="IPR039697">
    <property type="entry name" value="Alcohol_dehydrogenase_Fe"/>
</dbReference>
<dbReference type="PANTHER" id="PTHR11496">
    <property type="entry name" value="ALCOHOL DEHYDROGENASE"/>
    <property type="match status" value="1"/>
</dbReference>
<dbReference type="PANTHER" id="PTHR11496:SF102">
    <property type="entry name" value="ALCOHOL DEHYDROGENASE 4"/>
    <property type="match status" value="1"/>
</dbReference>
<dbReference type="Pfam" id="PF25137">
    <property type="entry name" value="ADH_Fe_C"/>
    <property type="match status" value="1"/>
</dbReference>
<dbReference type="Pfam" id="PF00465">
    <property type="entry name" value="Fe-ADH"/>
    <property type="match status" value="1"/>
</dbReference>
<dbReference type="SUPFAM" id="SSF56796">
    <property type="entry name" value="Dehydroquinate synthase-like"/>
    <property type="match status" value="1"/>
</dbReference>
<dbReference type="PROSITE" id="PS00913">
    <property type="entry name" value="ADH_IRON_1"/>
    <property type="match status" value="1"/>
</dbReference>
<dbReference type="PROSITE" id="PS00060">
    <property type="entry name" value="ADH_IRON_2"/>
    <property type="match status" value="1"/>
</dbReference>
<feature type="initiator methionine" description="Removed" evidence="3 4">
    <location>
        <position position="1"/>
    </location>
</feature>
<feature type="chain" id="PRO_0000087834" description="NAD-dependent methanol dehydrogenase">
    <location>
        <begin position="2"/>
        <end position="381"/>
    </location>
</feature>
<feature type="mutagenesis site" description="Shows a reduced dehydrogenase activity." evidence="2">
    <original>G</original>
    <variation>A</variation>
    <location>
        <position position="13"/>
    </location>
</feature>
<feature type="mutagenesis site" description="Shows almost the same dehydrogenase activity as the wild-type." evidence="2">
    <original>G</original>
    <variation>A</variation>
    <location>
        <position position="15"/>
    </location>
</feature>
<feature type="mutagenesis site" description="Shows almost the same dehydrogenase activity as the wild-type." evidence="2">
    <original>D</original>
    <variation>N</variation>
    <location>
        <position position="88"/>
    </location>
</feature>
<feature type="mutagenesis site" description="Shows a 10-fold decreased affinity for NAD and NADH and a strongly reduced dehydrogenase activity. Completely insensitive to the stimulating effect of the activator protein Act." evidence="2">
    <original>G</original>
    <variation>A</variation>
    <location>
        <position position="95"/>
    </location>
</feature>
<feature type="mutagenesis site" description="Shows an increase of the dehydrogenase activity and a decrease of the affinity for NAD and NADH. Completely insensitive to the stimulating effect of the activator protein Act. It does not bind NAD." evidence="2">
    <original>S</original>
    <variation>G</variation>
    <location>
        <position position="97"/>
    </location>
</feature>
<feature type="mutagenesis site" description="Shows an increase of the dehydrogenase activity and affinity for NAD and NADH." evidence="2">
    <original>S</original>
    <variation>T</variation>
    <location>
        <position position="97"/>
    </location>
</feature>
<feature type="mutagenesis site" description="Loss of dehydrogenase activity. It still binds NADH." evidence="2">
    <original>D</original>
    <variation>N</variation>
    <location>
        <position position="100"/>
    </location>
</feature>
<feature type="mutagenesis site" description="Loss of dehydrogenase activity. It does not bind NADH." evidence="2">
    <original>K</original>
    <variation>R</variation>
    <location>
        <position position="103"/>
    </location>
</feature>
<feature type="sequence conflict" description="In Ref. 2; AA sequence." evidence="10" ref="2">
    <original>K</original>
    <variation>L</variation>
    <location>
        <position position="18"/>
    </location>
</feature>
<feature type="sequence conflict" description="In Ref. 2; AA sequence." evidence="10" ref="2">
    <original>S</original>
    <variation>A</variation>
    <location>
        <position position="42"/>
    </location>
</feature>
<feature type="sequence conflict" description="In Ref. 2; AA sequence." evidence="10" ref="2">
    <original>A</original>
    <variation>D</variation>
    <location>
        <position position="50"/>
    </location>
</feature>
<feature type="sequence conflict" description="In Ref. 2; AA sequence." evidence="10" ref="2">
    <original>D</original>
    <variation>N</variation>
    <location>
        <position position="59"/>
    </location>
</feature>
<reference key="1">
    <citation type="journal article" date="1992" name="J. Bacteriol.">
        <title>Cloning, expression, and sequence analysis of the Bacillus methanolicus C1 methanol dehydrogenase gene.</title>
        <authorList>
            <person name="de Vries G.E."/>
            <person name="Arfman N."/>
            <person name="Terpstra P."/>
            <person name="Dijkhuizen L."/>
        </authorList>
    </citation>
    <scope>NUCLEOTIDE SEQUENCE [GENOMIC DNA]</scope>
    <scope>PROTEIN SEQUENCE OF 2-15</scope>
    <scope>FUNCTION</scope>
    <scope>COFACTOR</scope>
    <scope>ACTIVITY REGULATION</scope>
    <source>
        <strain>C1</strain>
    </source>
</reference>
<reference key="2">
    <citation type="journal article" date="1991" name="J. Biol. Chem.">
        <title>Electron microscopic analysis and biochemical characterization of a novel methanol dehydrogenase from the thermotolerant Bacillus sp. C1.</title>
        <authorList>
            <person name="Vonck J."/>
            <person name="Arfman N."/>
            <person name="de Vries G.E."/>
            <person name="van Beeumen J."/>
            <person name="van Bruggen E.F.J."/>
            <person name="Dijkhuizen L."/>
        </authorList>
    </citation>
    <scope>PROTEIN SEQUENCE OF 2-61</scope>
    <scope>FUNCTION</scope>
    <scope>COFACTOR</scope>
    <scope>ACTIVITY REGULATION</scope>
    <scope>SUBUNIT</scope>
    <source>
        <strain>C1</strain>
    </source>
</reference>
<reference key="3">
    <citation type="journal article" date="1989" name="Arch. Microbiol.">
        <title>Methanol metabolism in thermotolerant methylotrophic Bacillus strains involving a novel catabolic NAD-dependent methanol dehydrogenase as a key enzyme.</title>
        <authorList>
            <person name="Arfman N."/>
            <person name="Watling E.M."/>
            <person name="Clement W."/>
            <person name="van Oosterwijk R.J."/>
            <person name="de Vries G.E."/>
            <person name="Harder W."/>
            <person name="Attwood M.M."/>
            <person name="Dijkhuizen L."/>
        </authorList>
    </citation>
    <scope>FUNCTION</scope>
    <scope>CATALYTIC ACTIVITY</scope>
    <scope>SUBCELLULAR LOCATION</scope>
    <scope>SUBUNIT</scope>
    <scope>SUBSTRATE SPECIFICITY</scope>
    <source>
        <strain>C1</strain>
    </source>
</reference>
<reference key="4">
    <citation type="journal article" date="1991" name="J. Biol. Chem.">
        <title>Purification and characterization of an activator protein for methanol dehydrogenase from thermotolerant Bacillus spp.</title>
        <authorList>
            <person name="Arfman N."/>
            <person name="Van Beeumen J."/>
            <person name="De Vries G.E."/>
            <person name="Harder W."/>
            <person name="Dijkhuizen L."/>
        </authorList>
    </citation>
    <scope>FUNCTION</scope>
    <scope>CATALYTIC ACTIVITY</scope>
    <scope>BIOPHYSICOCHEMICAL PROPERTIES</scope>
    <scope>ACTIVITY REGULATION</scope>
    <source>
        <strain>C1</strain>
    </source>
</reference>
<reference key="5">
    <citation type="journal article" date="2002" name="J. Biol. Chem.">
        <title>Molecular, biochemical, and functional characterization of a Nudix hydrolase protein that stimulates the activity of a nicotinoprotein alcohol dehydrogenase.</title>
        <authorList>
            <person name="Kloosterman H."/>
            <person name="Vrijbloed J.W."/>
            <person name="Dijkhuizen L."/>
        </authorList>
    </citation>
    <scope>FUNCTION</scope>
    <scope>CATALYTIC ACTIVITY</scope>
    <scope>BIOPHYSICOCHEMICAL PROPERTIES</scope>
    <scope>REACTION MECHANISM</scope>
    <source>
        <strain>C1</strain>
    </source>
</reference>
<reference key="6">
    <citation type="journal article" date="2002" name="J. Biol. Chem.">
        <title>Identification of a magnesium-dependent NAD(P)(H)-binding domain in the nicotinoprotein methanol dehydrogenase from Bacillus methanolicus.</title>
        <authorList>
            <person name="Hektor H.J."/>
            <person name="Kloosterman H."/>
            <person name="Dijkhuizen L."/>
        </authorList>
    </citation>
    <scope>FUNCTION</scope>
    <scope>CATALYTIC ACTIVITY</scope>
    <scope>BIOPHYSICOCHEMICAL PROPERTIES</scope>
    <scope>MUTAGENESIS OF GLY-13; GLY-15; ASP-88; GLY-95; SER-97; ASP-100 AND LYS-103</scope>
    <scope>COFACTOR</scope>
    <source>
        <strain>C1</strain>
    </source>
</reference>
<proteinExistence type="evidence at protein level"/>
<organism>
    <name type="scientific">Bacillus methanolicus</name>
    <dbReference type="NCBI Taxonomy" id="1471"/>
    <lineage>
        <taxon>Bacteria</taxon>
        <taxon>Bacillati</taxon>
        <taxon>Bacillota</taxon>
        <taxon>Bacilli</taxon>
        <taxon>Bacillales</taxon>
        <taxon>Bacillaceae</taxon>
        <taxon>Bacillus</taxon>
    </lineage>
</organism>
<evidence type="ECO:0000269" key="1">
    <source>
    </source>
</evidence>
<evidence type="ECO:0000269" key="2">
    <source>
    </source>
</evidence>
<evidence type="ECO:0000269" key="3">
    <source>
    </source>
</evidence>
<evidence type="ECO:0000269" key="4">
    <source>
    </source>
</evidence>
<evidence type="ECO:0000269" key="5">
    <source>
    </source>
</evidence>
<evidence type="ECO:0000269" key="6">
    <source>
    </source>
</evidence>
<evidence type="ECO:0000303" key="7">
    <source>
    </source>
</evidence>
<evidence type="ECO:0000303" key="8">
    <source>
    </source>
</evidence>
<evidence type="ECO:0000303" key="9">
    <source>
    </source>
</evidence>
<evidence type="ECO:0000305" key="10"/>
<sequence length="381" mass="40045">MTNFFIPPASVIGRGAVKEVGTRLKQIGAKKALIVTDAFLHSTGLSEEVAKNIREAGLDVAIFPKAQPDPADTQVHEGVDVFKQENCDALVSIGGGSSHDTAKAIGLVAANGGRINDYQGVNSVEKPVVPVVAITTTAGTGSETTSLAVITDSARKVKMPVIDEKITPTVAIVDPELMVKKPAGLTIATGMDALSHAIEAYVAKGATPVTDAFAIQAMKLINEYLPKAVANGEDIEAREAMAYAQYMAGVAFNNGGLGLVHSISHQVGGVYKLQHGICNSVNMPHVCAFNLIAKTERFAHIAELLGENVSGLSTAAAAERAIVALERYNKNFGIPSGYAEMGVKEEDIELLAKNAFEDVCTQSNPRVATVQDIAQIIKNAL</sequence>
<protein>
    <recommendedName>
        <fullName evidence="8">NAD-dependent methanol dehydrogenase</fullName>
        <shortName evidence="8">MDH</shortName>
        <shortName evidence="9">MEDH</shortName>
        <ecNumber evidence="1 2 5 6">1.1.1.244</ecNumber>
    </recommendedName>
    <alternativeName>
        <fullName evidence="7">Type 3 alcohol dehydrogenase</fullName>
    </alternativeName>
</protein>
<name>MEDH_BACMT</name>
<accession>P31005</accession>
<comment type="function">
    <text evidence="1 2 3 4 5 6">Catalyzes the oxidation of methanol to yield formaldehyde. It possesses a NADH-dependent formaldehyde reductase activity and cannot use NADP.</text>
</comment>
<comment type="catalytic activity">
    <reaction evidence="1 2 5 6">
        <text>methanol + NAD(+) = formaldehyde + NADH + H(+)</text>
        <dbReference type="Rhea" id="RHEA:19401"/>
        <dbReference type="ChEBI" id="CHEBI:15378"/>
        <dbReference type="ChEBI" id="CHEBI:16842"/>
        <dbReference type="ChEBI" id="CHEBI:17790"/>
        <dbReference type="ChEBI" id="CHEBI:57540"/>
        <dbReference type="ChEBI" id="CHEBI:57945"/>
        <dbReference type="EC" id="1.1.1.244"/>
    </reaction>
</comment>
<comment type="cofactor">
    <cofactor evidence="2 3 4 6">
        <name>Mg(2+)</name>
        <dbReference type="ChEBI" id="CHEBI:18420"/>
    </cofactor>
</comment>
<comment type="cofactor">
    <cofactor evidence="2 3 4">
        <name>Zn(2+)</name>
        <dbReference type="ChEBI" id="CHEBI:29105"/>
    </cofactor>
</comment>
<comment type="activity regulation">
    <text evidence="3 4 5">Stimulated by the activator protein Act which requires the presence of magnesium ions. Inhibited by 1,10-phenanthroline.</text>
</comment>
<comment type="biophysicochemical properties">
    <kinetics>
        <KM evidence="2">9 uM for NADH</KM>
        <KM evidence="1 2">0.02 mM for NAD</KM>
        <KM evidence="5">0.7 mM for formaldehyde (without activator protein at pH 9.5 and 50 degrees Celsius)</KM>
        <KM evidence="5">2 mM for formaldehyde (with activator protein at pH 9.5 and 50 degrees Celsius)</KM>
        <KM evidence="5">57 mM for ethanol (with the activator protein at pH 9.5 and 50 degrees Celsius)</KM>
        <KM evidence="5">94 mM for ethanol (without activator protein at pH 9.5 and 50 degrees Celsius)</KM>
        <KM evidence="5">140 mM for methanol (with the activator protein at pH 9.5 and 50 degrees Celsius)</KM>
        <KM evidence="5">230 mM for methanol (without activator protein at pH 9.5 and 50 degrees Celsius)</KM>
        <Vmax evidence="1 2">1310.0 umol/min/mg enzyme</Vmax>
    </kinetics>
</comment>
<comment type="pathway">
    <text evidence="10">One-carbon metabolism; methanol degradation; formaldehyde from methanol: step 1/1.</text>
</comment>
<comment type="subunit">
    <text evidence="4 6">Homodecamer.</text>
</comment>
<comment type="subcellular location">
    <subcellularLocation>
        <location evidence="6">Cytoplasm</location>
    </subcellularLocation>
</comment>
<comment type="similarity">
    <text evidence="10">Belongs to the iron-containing alcohol dehydrogenase family.</text>
</comment>
<keyword id="KW-0963">Cytoplasm</keyword>
<keyword id="KW-0903">Direct protein sequencing</keyword>
<keyword id="KW-0460">Magnesium</keyword>
<keyword id="KW-0485">Methanol utilization</keyword>
<keyword id="KW-0520">NAD</keyword>
<keyword id="KW-0560">Oxidoreductase</keyword>
<keyword id="KW-0862">Zinc</keyword>
<gene>
    <name evidence="9" type="primary">mdh</name>
</gene>